<dbReference type="EMBL" id="AE000520">
    <property type="protein sequence ID" value="AAC65981.1"/>
    <property type="molecule type" value="Genomic_DNA"/>
</dbReference>
<dbReference type="PIR" id="C71251">
    <property type="entry name" value="C71251"/>
</dbReference>
<dbReference type="RefSeq" id="WP_010882468.1">
    <property type="nucleotide sequence ID" value="NC_021490.2"/>
</dbReference>
<dbReference type="SMR" id="O83987"/>
<dbReference type="IntAct" id="O83987">
    <property type="interactions" value="10"/>
</dbReference>
<dbReference type="STRING" id="243276.TP_1024"/>
<dbReference type="EnsemblBacteria" id="AAC65981">
    <property type="protein sequence ID" value="AAC65981"/>
    <property type="gene ID" value="TP_1024"/>
</dbReference>
<dbReference type="GeneID" id="93876771"/>
<dbReference type="KEGG" id="tpa:TP_1024"/>
<dbReference type="KEGG" id="tpw:TPANIC_1024"/>
<dbReference type="eggNOG" id="COG0103">
    <property type="taxonomic scope" value="Bacteria"/>
</dbReference>
<dbReference type="HOGENOM" id="CLU_046483_2_1_12"/>
<dbReference type="OrthoDB" id="9803965at2"/>
<dbReference type="Proteomes" id="UP000000811">
    <property type="component" value="Chromosome"/>
</dbReference>
<dbReference type="GO" id="GO:0005737">
    <property type="term" value="C:cytoplasm"/>
    <property type="evidence" value="ECO:0007669"/>
    <property type="project" value="UniProtKB-ARBA"/>
</dbReference>
<dbReference type="GO" id="GO:0015935">
    <property type="term" value="C:small ribosomal subunit"/>
    <property type="evidence" value="ECO:0007669"/>
    <property type="project" value="TreeGrafter"/>
</dbReference>
<dbReference type="GO" id="GO:0003723">
    <property type="term" value="F:RNA binding"/>
    <property type="evidence" value="ECO:0007669"/>
    <property type="project" value="TreeGrafter"/>
</dbReference>
<dbReference type="GO" id="GO:0003735">
    <property type="term" value="F:structural constituent of ribosome"/>
    <property type="evidence" value="ECO:0007669"/>
    <property type="project" value="InterPro"/>
</dbReference>
<dbReference type="GO" id="GO:0006412">
    <property type="term" value="P:translation"/>
    <property type="evidence" value="ECO:0007669"/>
    <property type="project" value="UniProtKB-UniRule"/>
</dbReference>
<dbReference type="FunFam" id="3.30.230.10:FF:000001">
    <property type="entry name" value="30S ribosomal protein S9"/>
    <property type="match status" value="1"/>
</dbReference>
<dbReference type="Gene3D" id="3.30.230.10">
    <property type="match status" value="1"/>
</dbReference>
<dbReference type="HAMAP" id="MF_00532_B">
    <property type="entry name" value="Ribosomal_uS9_B"/>
    <property type="match status" value="1"/>
</dbReference>
<dbReference type="InterPro" id="IPR020568">
    <property type="entry name" value="Ribosomal_Su5_D2-typ_SF"/>
</dbReference>
<dbReference type="InterPro" id="IPR000754">
    <property type="entry name" value="Ribosomal_uS9"/>
</dbReference>
<dbReference type="InterPro" id="IPR023035">
    <property type="entry name" value="Ribosomal_uS9_bac/plastid"/>
</dbReference>
<dbReference type="InterPro" id="IPR020574">
    <property type="entry name" value="Ribosomal_uS9_CS"/>
</dbReference>
<dbReference type="InterPro" id="IPR014721">
    <property type="entry name" value="Ribsml_uS5_D2-typ_fold_subgr"/>
</dbReference>
<dbReference type="NCBIfam" id="NF001099">
    <property type="entry name" value="PRK00132.1"/>
    <property type="match status" value="1"/>
</dbReference>
<dbReference type="PANTHER" id="PTHR21569">
    <property type="entry name" value="RIBOSOMAL PROTEIN S9"/>
    <property type="match status" value="1"/>
</dbReference>
<dbReference type="PANTHER" id="PTHR21569:SF1">
    <property type="entry name" value="SMALL RIBOSOMAL SUBUNIT PROTEIN US9M"/>
    <property type="match status" value="1"/>
</dbReference>
<dbReference type="Pfam" id="PF00380">
    <property type="entry name" value="Ribosomal_S9"/>
    <property type="match status" value="1"/>
</dbReference>
<dbReference type="SUPFAM" id="SSF54211">
    <property type="entry name" value="Ribosomal protein S5 domain 2-like"/>
    <property type="match status" value="1"/>
</dbReference>
<dbReference type="PROSITE" id="PS00360">
    <property type="entry name" value="RIBOSOMAL_S9"/>
    <property type="match status" value="1"/>
</dbReference>
<reference key="1">
    <citation type="journal article" date="1998" name="Science">
        <title>Complete genome sequence of Treponema pallidum, the syphilis spirochete.</title>
        <authorList>
            <person name="Fraser C.M."/>
            <person name="Norris S.J."/>
            <person name="Weinstock G.M."/>
            <person name="White O."/>
            <person name="Sutton G.G."/>
            <person name="Dodson R.J."/>
            <person name="Gwinn M.L."/>
            <person name="Hickey E.K."/>
            <person name="Clayton R.A."/>
            <person name="Ketchum K.A."/>
            <person name="Sodergren E."/>
            <person name="Hardham J.M."/>
            <person name="McLeod M.P."/>
            <person name="Salzberg S.L."/>
            <person name="Peterson J.D."/>
            <person name="Khalak H.G."/>
            <person name="Richardson D.L."/>
            <person name="Howell J.K."/>
            <person name="Chidambaram M."/>
            <person name="Utterback T.R."/>
            <person name="McDonald L.A."/>
            <person name="Artiach P."/>
            <person name="Bowman C."/>
            <person name="Cotton M.D."/>
            <person name="Fujii C."/>
            <person name="Garland S.A."/>
            <person name="Hatch B."/>
            <person name="Horst K."/>
            <person name="Roberts K.M."/>
            <person name="Sandusky M."/>
            <person name="Weidman J.F."/>
            <person name="Smith H.O."/>
            <person name="Venter J.C."/>
        </authorList>
    </citation>
    <scope>NUCLEOTIDE SEQUENCE [LARGE SCALE GENOMIC DNA]</scope>
    <source>
        <strain>Nichols</strain>
    </source>
</reference>
<name>RS9_TREPA</name>
<proteinExistence type="inferred from homology"/>
<keyword id="KW-1185">Reference proteome</keyword>
<keyword id="KW-0687">Ribonucleoprotein</keyword>
<keyword id="KW-0689">Ribosomal protein</keyword>
<gene>
    <name type="primary">rpsI</name>
    <name type="ordered locus">TP_1024</name>
</gene>
<accession>O83987</accession>
<comment type="similarity">
    <text evidence="1">Belongs to the universal ribosomal protein uS9 family.</text>
</comment>
<organism>
    <name type="scientific">Treponema pallidum (strain Nichols)</name>
    <dbReference type="NCBI Taxonomy" id="243276"/>
    <lineage>
        <taxon>Bacteria</taxon>
        <taxon>Pseudomonadati</taxon>
        <taxon>Spirochaetota</taxon>
        <taxon>Spirochaetia</taxon>
        <taxon>Spirochaetales</taxon>
        <taxon>Treponemataceae</taxon>
        <taxon>Treponema</taxon>
    </lineage>
</organism>
<evidence type="ECO:0000305" key="1"/>
<sequence length="129" mass="14252">MKNLGIGTGRRKTAVARVCIRMGNGNVTVNRRDVGAYFPTAEQLRRVREPLFATANERRYDVIVNVYGGGLDGQAGACAHGIARALVRADASNQASLRAGGLLTRDSRMVERKKYGQRGARRRFQFSKR</sequence>
<protein>
    <recommendedName>
        <fullName evidence="1">Small ribosomal subunit protein uS9</fullName>
    </recommendedName>
    <alternativeName>
        <fullName>30S ribosomal protein S9</fullName>
    </alternativeName>
</protein>
<feature type="chain" id="PRO_0000111433" description="Small ribosomal subunit protein uS9">
    <location>
        <begin position="1"/>
        <end position="129"/>
    </location>
</feature>